<sequence length="164" mass="17417">MQRIALYPGSFDPVTNGHLDVVRQAVHLCDRLIVAVGVHHGKKPLFSTEERLAMVHEVLEPVAAAAGCGFEASTYDDLTVTAAQKAGAIMMIRGLRDGTDFDYEMQLAGMNQTMVPGIQTVFVPASVAVRPIAATLVRQIAAMGGDVSHFVPAAVAASLKAKFN</sequence>
<gene>
    <name evidence="1" type="primary">coaD</name>
    <name type="ordered locus">BBta_4369</name>
</gene>
<name>COAD_BRASB</name>
<comment type="function">
    <text evidence="1">Reversibly transfers an adenylyl group from ATP to 4'-phosphopantetheine, yielding dephospho-CoA (dPCoA) and pyrophosphate.</text>
</comment>
<comment type="catalytic activity">
    <reaction evidence="1">
        <text>(R)-4'-phosphopantetheine + ATP + H(+) = 3'-dephospho-CoA + diphosphate</text>
        <dbReference type="Rhea" id="RHEA:19801"/>
        <dbReference type="ChEBI" id="CHEBI:15378"/>
        <dbReference type="ChEBI" id="CHEBI:30616"/>
        <dbReference type="ChEBI" id="CHEBI:33019"/>
        <dbReference type="ChEBI" id="CHEBI:57328"/>
        <dbReference type="ChEBI" id="CHEBI:61723"/>
        <dbReference type="EC" id="2.7.7.3"/>
    </reaction>
</comment>
<comment type="cofactor">
    <cofactor evidence="1">
        <name>Mg(2+)</name>
        <dbReference type="ChEBI" id="CHEBI:18420"/>
    </cofactor>
</comment>
<comment type="pathway">
    <text evidence="1">Cofactor biosynthesis; coenzyme A biosynthesis; CoA from (R)-pantothenate: step 4/5.</text>
</comment>
<comment type="subunit">
    <text evidence="1">Homohexamer.</text>
</comment>
<comment type="subcellular location">
    <subcellularLocation>
        <location evidence="1">Cytoplasm</location>
    </subcellularLocation>
</comment>
<comment type="similarity">
    <text evidence="1">Belongs to the bacterial CoaD family.</text>
</comment>
<protein>
    <recommendedName>
        <fullName evidence="1">Phosphopantetheine adenylyltransferase</fullName>
        <ecNumber evidence="1">2.7.7.3</ecNumber>
    </recommendedName>
    <alternativeName>
        <fullName evidence="1">Dephospho-CoA pyrophosphorylase</fullName>
    </alternativeName>
    <alternativeName>
        <fullName evidence="1">Pantetheine-phosphate adenylyltransferase</fullName>
        <shortName evidence="1">PPAT</shortName>
    </alternativeName>
</protein>
<reference key="1">
    <citation type="journal article" date="2007" name="Science">
        <title>Legumes symbioses: absence of nod genes in photosynthetic bradyrhizobia.</title>
        <authorList>
            <person name="Giraud E."/>
            <person name="Moulin L."/>
            <person name="Vallenet D."/>
            <person name="Barbe V."/>
            <person name="Cytryn E."/>
            <person name="Avarre J.-C."/>
            <person name="Jaubert M."/>
            <person name="Simon D."/>
            <person name="Cartieaux F."/>
            <person name="Prin Y."/>
            <person name="Bena G."/>
            <person name="Hannibal L."/>
            <person name="Fardoux J."/>
            <person name="Kojadinovic M."/>
            <person name="Vuillet L."/>
            <person name="Lajus A."/>
            <person name="Cruveiller S."/>
            <person name="Rouy Z."/>
            <person name="Mangenot S."/>
            <person name="Segurens B."/>
            <person name="Dossat C."/>
            <person name="Franck W.L."/>
            <person name="Chang W.-S."/>
            <person name="Saunders E."/>
            <person name="Bruce D."/>
            <person name="Richardson P."/>
            <person name="Normand P."/>
            <person name="Dreyfus B."/>
            <person name="Pignol D."/>
            <person name="Stacey G."/>
            <person name="Emerich D."/>
            <person name="Vermeglio A."/>
            <person name="Medigue C."/>
            <person name="Sadowsky M."/>
        </authorList>
    </citation>
    <scope>NUCLEOTIDE SEQUENCE [LARGE SCALE GENOMIC DNA]</scope>
    <source>
        <strain>BTAi1 / ATCC BAA-1182</strain>
    </source>
</reference>
<organism>
    <name type="scientific">Bradyrhizobium sp. (strain BTAi1 / ATCC BAA-1182)</name>
    <dbReference type="NCBI Taxonomy" id="288000"/>
    <lineage>
        <taxon>Bacteria</taxon>
        <taxon>Pseudomonadati</taxon>
        <taxon>Pseudomonadota</taxon>
        <taxon>Alphaproteobacteria</taxon>
        <taxon>Hyphomicrobiales</taxon>
        <taxon>Nitrobacteraceae</taxon>
        <taxon>Bradyrhizobium</taxon>
    </lineage>
</organism>
<keyword id="KW-0067">ATP-binding</keyword>
<keyword id="KW-0173">Coenzyme A biosynthesis</keyword>
<keyword id="KW-0963">Cytoplasm</keyword>
<keyword id="KW-0460">Magnesium</keyword>
<keyword id="KW-0547">Nucleotide-binding</keyword>
<keyword id="KW-0548">Nucleotidyltransferase</keyword>
<keyword id="KW-1185">Reference proteome</keyword>
<keyword id="KW-0808">Transferase</keyword>
<evidence type="ECO:0000255" key="1">
    <source>
        <dbReference type="HAMAP-Rule" id="MF_00151"/>
    </source>
</evidence>
<feature type="chain" id="PRO_1000011098" description="Phosphopantetheine adenylyltransferase">
    <location>
        <begin position="1"/>
        <end position="164"/>
    </location>
</feature>
<feature type="binding site" evidence="1">
    <location>
        <begin position="10"/>
        <end position="11"/>
    </location>
    <ligand>
        <name>ATP</name>
        <dbReference type="ChEBI" id="CHEBI:30616"/>
    </ligand>
</feature>
<feature type="binding site" evidence="1">
    <location>
        <position position="10"/>
    </location>
    <ligand>
        <name>substrate</name>
    </ligand>
</feature>
<feature type="binding site" evidence="1">
    <location>
        <position position="18"/>
    </location>
    <ligand>
        <name>ATP</name>
        <dbReference type="ChEBI" id="CHEBI:30616"/>
    </ligand>
</feature>
<feature type="binding site" evidence="1">
    <location>
        <position position="42"/>
    </location>
    <ligand>
        <name>substrate</name>
    </ligand>
</feature>
<feature type="binding site" evidence="1">
    <location>
        <position position="79"/>
    </location>
    <ligand>
        <name>substrate</name>
    </ligand>
</feature>
<feature type="binding site" evidence="1">
    <location>
        <position position="93"/>
    </location>
    <ligand>
        <name>substrate</name>
    </ligand>
</feature>
<feature type="binding site" evidence="1">
    <location>
        <begin position="94"/>
        <end position="96"/>
    </location>
    <ligand>
        <name>ATP</name>
        <dbReference type="ChEBI" id="CHEBI:30616"/>
    </ligand>
</feature>
<feature type="binding site" evidence="1">
    <location>
        <position position="104"/>
    </location>
    <ligand>
        <name>ATP</name>
        <dbReference type="ChEBI" id="CHEBI:30616"/>
    </ligand>
</feature>
<feature type="binding site" evidence="1">
    <location>
        <begin position="129"/>
        <end position="135"/>
    </location>
    <ligand>
        <name>ATP</name>
        <dbReference type="ChEBI" id="CHEBI:30616"/>
    </ligand>
</feature>
<feature type="site" description="Transition state stabilizer" evidence="1">
    <location>
        <position position="18"/>
    </location>
</feature>
<proteinExistence type="inferred from homology"/>
<accession>A5EJR7</accession>
<dbReference type="EC" id="2.7.7.3" evidence="1"/>
<dbReference type="EMBL" id="CP000494">
    <property type="protein sequence ID" value="ABQ36411.1"/>
    <property type="molecule type" value="Genomic_DNA"/>
</dbReference>
<dbReference type="RefSeq" id="WP_012044408.1">
    <property type="nucleotide sequence ID" value="NC_009485.1"/>
</dbReference>
<dbReference type="SMR" id="A5EJR7"/>
<dbReference type="STRING" id="288000.BBta_4369"/>
<dbReference type="KEGG" id="bbt:BBta_4369"/>
<dbReference type="eggNOG" id="COG0669">
    <property type="taxonomic scope" value="Bacteria"/>
</dbReference>
<dbReference type="HOGENOM" id="CLU_100149_0_1_5"/>
<dbReference type="OrthoDB" id="9806661at2"/>
<dbReference type="UniPathway" id="UPA00241">
    <property type="reaction ID" value="UER00355"/>
</dbReference>
<dbReference type="Proteomes" id="UP000000246">
    <property type="component" value="Chromosome"/>
</dbReference>
<dbReference type="GO" id="GO:0005737">
    <property type="term" value="C:cytoplasm"/>
    <property type="evidence" value="ECO:0007669"/>
    <property type="project" value="UniProtKB-SubCell"/>
</dbReference>
<dbReference type="GO" id="GO:0005524">
    <property type="term" value="F:ATP binding"/>
    <property type="evidence" value="ECO:0007669"/>
    <property type="project" value="UniProtKB-KW"/>
</dbReference>
<dbReference type="GO" id="GO:0004595">
    <property type="term" value="F:pantetheine-phosphate adenylyltransferase activity"/>
    <property type="evidence" value="ECO:0007669"/>
    <property type="project" value="UniProtKB-UniRule"/>
</dbReference>
<dbReference type="GO" id="GO:0015937">
    <property type="term" value="P:coenzyme A biosynthetic process"/>
    <property type="evidence" value="ECO:0007669"/>
    <property type="project" value="UniProtKB-UniRule"/>
</dbReference>
<dbReference type="CDD" id="cd02163">
    <property type="entry name" value="PPAT"/>
    <property type="match status" value="1"/>
</dbReference>
<dbReference type="Gene3D" id="3.40.50.620">
    <property type="entry name" value="HUPs"/>
    <property type="match status" value="1"/>
</dbReference>
<dbReference type="HAMAP" id="MF_00151">
    <property type="entry name" value="PPAT_bact"/>
    <property type="match status" value="1"/>
</dbReference>
<dbReference type="InterPro" id="IPR004821">
    <property type="entry name" value="Cyt_trans-like"/>
</dbReference>
<dbReference type="InterPro" id="IPR001980">
    <property type="entry name" value="PPAT"/>
</dbReference>
<dbReference type="InterPro" id="IPR014729">
    <property type="entry name" value="Rossmann-like_a/b/a_fold"/>
</dbReference>
<dbReference type="NCBIfam" id="TIGR01510">
    <property type="entry name" value="coaD_prev_kdtB"/>
    <property type="match status" value="1"/>
</dbReference>
<dbReference type="NCBIfam" id="TIGR00125">
    <property type="entry name" value="cyt_tran_rel"/>
    <property type="match status" value="1"/>
</dbReference>
<dbReference type="PANTHER" id="PTHR21342">
    <property type="entry name" value="PHOSPHOPANTETHEINE ADENYLYLTRANSFERASE"/>
    <property type="match status" value="1"/>
</dbReference>
<dbReference type="PANTHER" id="PTHR21342:SF1">
    <property type="entry name" value="PHOSPHOPANTETHEINE ADENYLYLTRANSFERASE"/>
    <property type="match status" value="1"/>
</dbReference>
<dbReference type="Pfam" id="PF01467">
    <property type="entry name" value="CTP_transf_like"/>
    <property type="match status" value="1"/>
</dbReference>
<dbReference type="PRINTS" id="PR01020">
    <property type="entry name" value="LPSBIOSNTHSS"/>
</dbReference>
<dbReference type="SUPFAM" id="SSF52374">
    <property type="entry name" value="Nucleotidylyl transferase"/>
    <property type="match status" value="1"/>
</dbReference>